<keyword id="KW-0021">Allosteric enzyme</keyword>
<keyword id="KW-0328">Glycosyltransferase</keyword>
<keyword id="KW-0342">GTP-binding</keyword>
<keyword id="KW-0460">Magnesium</keyword>
<keyword id="KW-0547">Nucleotide-binding</keyword>
<keyword id="KW-0808">Transferase</keyword>
<gene>
    <name evidence="1" type="primary">upp</name>
    <name type="ordered locus">BceJ2315_23470</name>
    <name type="ORF">BCAL2387</name>
</gene>
<name>UPP_BURCJ</name>
<comment type="function">
    <text evidence="1">Catalyzes the conversion of uracil and 5-phospho-alpha-D-ribose 1-diphosphate (PRPP) to UMP and diphosphate.</text>
</comment>
<comment type="catalytic activity">
    <reaction evidence="1">
        <text>UMP + diphosphate = 5-phospho-alpha-D-ribose 1-diphosphate + uracil</text>
        <dbReference type="Rhea" id="RHEA:13017"/>
        <dbReference type="ChEBI" id="CHEBI:17568"/>
        <dbReference type="ChEBI" id="CHEBI:33019"/>
        <dbReference type="ChEBI" id="CHEBI:57865"/>
        <dbReference type="ChEBI" id="CHEBI:58017"/>
        <dbReference type="EC" id="2.4.2.9"/>
    </reaction>
</comment>
<comment type="cofactor">
    <cofactor evidence="1">
        <name>Mg(2+)</name>
        <dbReference type="ChEBI" id="CHEBI:18420"/>
    </cofactor>
    <text evidence="1">Binds 1 Mg(2+) ion per subunit. The magnesium is bound as Mg-PRPP.</text>
</comment>
<comment type="activity regulation">
    <text evidence="1">Allosterically activated by GTP.</text>
</comment>
<comment type="pathway">
    <text evidence="1">Pyrimidine metabolism; UMP biosynthesis via salvage pathway; UMP from uracil: step 1/1.</text>
</comment>
<comment type="similarity">
    <text evidence="1">Belongs to the UPRTase family.</text>
</comment>
<evidence type="ECO:0000255" key="1">
    <source>
        <dbReference type="HAMAP-Rule" id="MF_01218"/>
    </source>
</evidence>
<proteinExistence type="inferred from homology"/>
<sequence>MKQDSRFPNLFITDHPLIQHKLTHMRDKDTSTRTFRELLREITLLMGYEITRNLPITTKRVETPLVAVDAPVIAGKKLAIVPVLRAGIGMSDGLLDLVPSARVGHIGVYRADDHRPVEYLVRLPDLEDRIFILCDPMVATGYSAVHAVDVLKRRNVPAANIMFVALVAAPEGVQVFQDAHPDVKLFVASLDSHLNEHAYIVPGLGDAGDRLFGTKN</sequence>
<dbReference type="EC" id="2.4.2.9" evidence="1"/>
<dbReference type="EMBL" id="AM747720">
    <property type="protein sequence ID" value="CAR52688.1"/>
    <property type="molecule type" value="Genomic_DNA"/>
</dbReference>
<dbReference type="RefSeq" id="WP_006481871.1">
    <property type="nucleotide sequence ID" value="NC_011000.1"/>
</dbReference>
<dbReference type="SMR" id="B4E5R5"/>
<dbReference type="GeneID" id="71055823"/>
<dbReference type="KEGG" id="bcj:BCAL2387"/>
<dbReference type="eggNOG" id="COG0035">
    <property type="taxonomic scope" value="Bacteria"/>
</dbReference>
<dbReference type="HOGENOM" id="CLU_067096_2_2_4"/>
<dbReference type="BioCyc" id="BCEN216591:G1G1V-2634-MONOMER"/>
<dbReference type="UniPathway" id="UPA00574">
    <property type="reaction ID" value="UER00636"/>
</dbReference>
<dbReference type="Proteomes" id="UP000001035">
    <property type="component" value="Chromosome 1"/>
</dbReference>
<dbReference type="GO" id="GO:0005525">
    <property type="term" value="F:GTP binding"/>
    <property type="evidence" value="ECO:0007669"/>
    <property type="project" value="UniProtKB-KW"/>
</dbReference>
<dbReference type="GO" id="GO:0000287">
    <property type="term" value="F:magnesium ion binding"/>
    <property type="evidence" value="ECO:0007669"/>
    <property type="project" value="UniProtKB-UniRule"/>
</dbReference>
<dbReference type="GO" id="GO:0004845">
    <property type="term" value="F:uracil phosphoribosyltransferase activity"/>
    <property type="evidence" value="ECO:0007669"/>
    <property type="project" value="UniProtKB-UniRule"/>
</dbReference>
<dbReference type="GO" id="GO:0044206">
    <property type="term" value="P:UMP salvage"/>
    <property type="evidence" value="ECO:0007669"/>
    <property type="project" value="UniProtKB-UniRule"/>
</dbReference>
<dbReference type="GO" id="GO:0006223">
    <property type="term" value="P:uracil salvage"/>
    <property type="evidence" value="ECO:0007669"/>
    <property type="project" value="InterPro"/>
</dbReference>
<dbReference type="CDD" id="cd06223">
    <property type="entry name" value="PRTases_typeI"/>
    <property type="match status" value="1"/>
</dbReference>
<dbReference type="FunFam" id="3.40.50.2020:FF:000003">
    <property type="entry name" value="Uracil phosphoribosyltransferase"/>
    <property type="match status" value="1"/>
</dbReference>
<dbReference type="Gene3D" id="3.40.50.2020">
    <property type="match status" value="1"/>
</dbReference>
<dbReference type="HAMAP" id="MF_01218_B">
    <property type="entry name" value="Upp_B"/>
    <property type="match status" value="1"/>
</dbReference>
<dbReference type="InterPro" id="IPR000836">
    <property type="entry name" value="PRibTrfase_dom"/>
</dbReference>
<dbReference type="InterPro" id="IPR029057">
    <property type="entry name" value="PRTase-like"/>
</dbReference>
<dbReference type="InterPro" id="IPR034332">
    <property type="entry name" value="Upp_B"/>
</dbReference>
<dbReference type="InterPro" id="IPR050054">
    <property type="entry name" value="UPRTase/APRTase"/>
</dbReference>
<dbReference type="InterPro" id="IPR005765">
    <property type="entry name" value="Ura_phspho_trans"/>
</dbReference>
<dbReference type="NCBIfam" id="NF001097">
    <property type="entry name" value="PRK00129.1"/>
    <property type="match status" value="1"/>
</dbReference>
<dbReference type="NCBIfam" id="TIGR01091">
    <property type="entry name" value="upp"/>
    <property type="match status" value="1"/>
</dbReference>
<dbReference type="PANTHER" id="PTHR32315">
    <property type="entry name" value="ADENINE PHOSPHORIBOSYLTRANSFERASE"/>
    <property type="match status" value="1"/>
</dbReference>
<dbReference type="PANTHER" id="PTHR32315:SF4">
    <property type="entry name" value="URACIL PHOSPHORIBOSYLTRANSFERASE, CHLOROPLASTIC"/>
    <property type="match status" value="1"/>
</dbReference>
<dbReference type="Pfam" id="PF14681">
    <property type="entry name" value="UPRTase"/>
    <property type="match status" value="1"/>
</dbReference>
<dbReference type="SUPFAM" id="SSF53271">
    <property type="entry name" value="PRTase-like"/>
    <property type="match status" value="1"/>
</dbReference>
<protein>
    <recommendedName>
        <fullName evidence="1">Uracil phosphoribosyltransferase</fullName>
        <ecNumber evidence="1">2.4.2.9</ecNumber>
    </recommendedName>
    <alternativeName>
        <fullName evidence="1">UMP pyrophosphorylase</fullName>
    </alternativeName>
    <alternativeName>
        <fullName evidence="1">UPRTase</fullName>
    </alternativeName>
</protein>
<feature type="chain" id="PRO_1000139103" description="Uracil phosphoribosyltransferase">
    <location>
        <begin position="1"/>
        <end position="216"/>
    </location>
</feature>
<feature type="binding site" evidence="1">
    <location>
        <position position="85"/>
    </location>
    <ligand>
        <name>5-phospho-alpha-D-ribose 1-diphosphate</name>
        <dbReference type="ChEBI" id="CHEBI:58017"/>
    </ligand>
</feature>
<feature type="binding site" evidence="1">
    <location>
        <position position="110"/>
    </location>
    <ligand>
        <name>5-phospho-alpha-D-ribose 1-diphosphate</name>
        <dbReference type="ChEBI" id="CHEBI:58017"/>
    </ligand>
</feature>
<feature type="binding site" evidence="1">
    <location>
        <begin position="135"/>
        <end position="143"/>
    </location>
    <ligand>
        <name>5-phospho-alpha-D-ribose 1-diphosphate</name>
        <dbReference type="ChEBI" id="CHEBI:58017"/>
    </ligand>
</feature>
<feature type="binding site" evidence="1">
    <location>
        <position position="200"/>
    </location>
    <ligand>
        <name>uracil</name>
        <dbReference type="ChEBI" id="CHEBI:17568"/>
    </ligand>
</feature>
<feature type="binding site" evidence="1">
    <location>
        <begin position="205"/>
        <end position="207"/>
    </location>
    <ligand>
        <name>uracil</name>
        <dbReference type="ChEBI" id="CHEBI:17568"/>
    </ligand>
</feature>
<feature type="binding site" evidence="1">
    <location>
        <position position="206"/>
    </location>
    <ligand>
        <name>5-phospho-alpha-D-ribose 1-diphosphate</name>
        <dbReference type="ChEBI" id="CHEBI:58017"/>
    </ligand>
</feature>
<reference key="1">
    <citation type="journal article" date="2009" name="J. Bacteriol.">
        <title>The genome of Burkholderia cenocepacia J2315, an epidemic pathogen of cystic fibrosis patients.</title>
        <authorList>
            <person name="Holden M.T."/>
            <person name="Seth-Smith H.M."/>
            <person name="Crossman L.C."/>
            <person name="Sebaihia M."/>
            <person name="Bentley S.D."/>
            <person name="Cerdeno-Tarraga A.M."/>
            <person name="Thomson N.R."/>
            <person name="Bason N."/>
            <person name="Quail M.A."/>
            <person name="Sharp S."/>
            <person name="Cherevach I."/>
            <person name="Churcher C."/>
            <person name="Goodhead I."/>
            <person name="Hauser H."/>
            <person name="Holroyd N."/>
            <person name="Mungall K."/>
            <person name="Scott P."/>
            <person name="Walker D."/>
            <person name="White B."/>
            <person name="Rose H."/>
            <person name="Iversen P."/>
            <person name="Mil-Homens D."/>
            <person name="Rocha E.P."/>
            <person name="Fialho A.M."/>
            <person name="Baldwin A."/>
            <person name="Dowson C."/>
            <person name="Barrell B.G."/>
            <person name="Govan J.R."/>
            <person name="Vandamme P."/>
            <person name="Hart C.A."/>
            <person name="Mahenthiralingam E."/>
            <person name="Parkhill J."/>
        </authorList>
    </citation>
    <scope>NUCLEOTIDE SEQUENCE [LARGE SCALE GENOMIC DNA]</scope>
    <source>
        <strain>ATCC BAA-245 / DSM 16553 / LMG 16656 / NCTC 13227 / J2315 / CF5610</strain>
    </source>
</reference>
<organism>
    <name type="scientific">Burkholderia cenocepacia (strain ATCC BAA-245 / DSM 16553 / LMG 16656 / NCTC 13227 / J2315 / CF5610)</name>
    <name type="common">Burkholderia cepacia (strain J2315)</name>
    <dbReference type="NCBI Taxonomy" id="216591"/>
    <lineage>
        <taxon>Bacteria</taxon>
        <taxon>Pseudomonadati</taxon>
        <taxon>Pseudomonadota</taxon>
        <taxon>Betaproteobacteria</taxon>
        <taxon>Burkholderiales</taxon>
        <taxon>Burkholderiaceae</taxon>
        <taxon>Burkholderia</taxon>
        <taxon>Burkholderia cepacia complex</taxon>
    </lineage>
</organism>
<accession>B4E5R5</accession>